<protein>
    <recommendedName>
        <fullName evidence="1">Malate dehydrogenase</fullName>
        <ecNumber evidence="1">1.1.1.37</ecNumber>
    </recommendedName>
</protein>
<proteinExistence type="inferred from homology"/>
<sequence length="327" mass="35192">MKAPVRVTVTGAAGQISYSLLFRIAAGEMLGADQPVILQMLEITPALEALKGVAMELDDCAFPLLHSMVCTDDANVAFKDSDYALLVGARPRGPGMERNDLLEANAAIFSVQGKAINDHASRGIKVLVVGNPANTNALIAQRNAPDIDPRQFTAMTRLDHNRGMSQLASKLDVSINDITKMTIWGNHSSTQYPDLYHALVKGDAAIDKVDSTWYAEEYIPTVQQRGAAIIKARGASSAASAANAAIFHMRDWALGSPEGDWVSMGVYSDGSYGIEKGLIYSFPCVCKNGDWEIVQGLSIDEFSQARMTATETELQGERDAVKALLPA</sequence>
<name>MDH_TERTT</name>
<gene>
    <name evidence="1" type="primary">mdh</name>
    <name type="ordered locus">TERTU_1732</name>
</gene>
<dbReference type="EC" id="1.1.1.37" evidence="1"/>
<dbReference type="EMBL" id="CP001614">
    <property type="protein sequence ID" value="ACR13034.1"/>
    <property type="molecule type" value="Genomic_DNA"/>
</dbReference>
<dbReference type="RefSeq" id="WP_015819147.1">
    <property type="nucleotide sequence ID" value="NC_012997.1"/>
</dbReference>
<dbReference type="SMR" id="C5BU70"/>
<dbReference type="STRING" id="377629.TERTU_1732"/>
<dbReference type="KEGG" id="ttu:TERTU_1732"/>
<dbReference type="eggNOG" id="COG0039">
    <property type="taxonomic scope" value="Bacteria"/>
</dbReference>
<dbReference type="HOGENOM" id="CLU_040727_2_0_6"/>
<dbReference type="OrthoDB" id="9802969at2"/>
<dbReference type="Proteomes" id="UP000009080">
    <property type="component" value="Chromosome"/>
</dbReference>
<dbReference type="GO" id="GO:0030060">
    <property type="term" value="F:L-malate dehydrogenase (NAD+) activity"/>
    <property type="evidence" value="ECO:0007669"/>
    <property type="project" value="UniProtKB-UniRule"/>
</dbReference>
<dbReference type="GO" id="GO:0006108">
    <property type="term" value="P:malate metabolic process"/>
    <property type="evidence" value="ECO:0007669"/>
    <property type="project" value="InterPro"/>
</dbReference>
<dbReference type="GO" id="GO:0006099">
    <property type="term" value="P:tricarboxylic acid cycle"/>
    <property type="evidence" value="ECO:0007669"/>
    <property type="project" value="UniProtKB-UniRule"/>
</dbReference>
<dbReference type="CDD" id="cd01338">
    <property type="entry name" value="MDH_chloroplast-like"/>
    <property type="match status" value="1"/>
</dbReference>
<dbReference type="FunFam" id="3.40.50.720:FF:000010">
    <property type="entry name" value="Malate dehydrogenase"/>
    <property type="match status" value="1"/>
</dbReference>
<dbReference type="FunFam" id="3.90.110.10:FF:000002">
    <property type="entry name" value="Malate dehydrogenase"/>
    <property type="match status" value="1"/>
</dbReference>
<dbReference type="Gene3D" id="3.90.110.10">
    <property type="entry name" value="Lactate dehydrogenase/glycoside hydrolase, family 4, C-terminal"/>
    <property type="match status" value="1"/>
</dbReference>
<dbReference type="Gene3D" id="3.40.50.720">
    <property type="entry name" value="NAD(P)-binding Rossmann-like Domain"/>
    <property type="match status" value="1"/>
</dbReference>
<dbReference type="HAMAP" id="MF_01517">
    <property type="entry name" value="Malate_dehydrog_2"/>
    <property type="match status" value="1"/>
</dbReference>
<dbReference type="InterPro" id="IPR001557">
    <property type="entry name" value="L-lactate/malate_DH"/>
</dbReference>
<dbReference type="InterPro" id="IPR022383">
    <property type="entry name" value="Lactate/malate_DH_C"/>
</dbReference>
<dbReference type="InterPro" id="IPR001236">
    <property type="entry name" value="Lactate/malate_DH_N"/>
</dbReference>
<dbReference type="InterPro" id="IPR015955">
    <property type="entry name" value="Lactate_DH/Glyco_Ohase_4_C"/>
</dbReference>
<dbReference type="InterPro" id="IPR010945">
    <property type="entry name" value="Malate_DH_type2"/>
</dbReference>
<dbReference type="InterPro" id="IPR036291">
    <property type="entry name" value="NAD(P)-bd_dom_sf"/>
</dbReference>
<dbReference type="NCBIfam" id="TIGR01759">
    <property type="entry name" value="MalateDH-SF1"/>
    <property type="match status" value="1"/>
</dbReference>
<dbReference type="NCBIfam" id="NF003916">
    <property type="entry name" value="PRK05442.1"/>
    <property type="match status" value="1"/>
</dbReference>
<dbReference type="PANTHER" id="PTHR23382">
    <property type="entry name" value="MALATE DEHYDROGENASE"/>
    <property type="match status" value="1"/>
</dbReference>
<dbReference type="Pfam" id="PF02866">
    <property type="entry name" value="Ldh_1_C"/>
    <property type="match status" value="1"/>
</dbReference>
<dbReference type="Pfam" id="PF00056">
    <property type="entry name" value="Ldh_1_N"/>
    <property type="match status" value="1"/>
</dbReference>
<dbReference type="PIRSF" id="PIRSF000102">
    <property type="entry name" value="Lac_mal_DH"/>
    <property type="match status" value="1"/>
</dbReference>
<dbReference type="SUPFAM" id="SSF56327">
    <property type="entry name" value="LDH C-terminal domain-like"/>
    <property type="match status" value="1"/>
</dbReference>
<dbReference type="SUPFAM" id="SSF51735">
    <property type="entry name" value="NAD(P)-binding Rossmann-fold domains"/>
    <property type="match status" value="1"/>
</dbReference>
<evidence type="ECO:0000255" key="1">
    <source>
        <dbReference type="HAMAP-Rule" id="MF_01517"/>
    </source>
</evidence>
<accession>C5BU70</accession>
<feature type="chain" id="PRO_1000215356" description="Malate dehydrogenase">
    <location>
        <begin position="1"/>
        <end position="327"/>
    </location>
</feature>
<feature type="active site" description="Proton acceptor" evidence="1">
    <location>
        <position position="187"/>
    </location>
</feature>
<feature type="binding site" evidence="1">
    <location>
        <begin position="11"/>
        <end position="17"/>
    </location>
    <ligand>
        <name>NAD(+)</name>
        <dbReference type="ChEBI" id="CHEBI:57540"/>
    </ligand>
</feature>
<feature type="binding site" evidence="1">
    <location>
        <position position="92"/>
    </location>
    <ligand>
        <name>substrate</name>
    </ligand>
</feature>
<feature type="binding site" evidence="1">
    <location>
        <position position="98"/>
    </location>
    <ligand>
        <name>substrate</name>
    </ligand>
</feature>
<feature type="binding site" evidence="1">
    <location>
        <position position="105"/>
    </location>
    <ligand>
        <name>NAD(+)</name>
        <dbReference type="ChEBI" id="CHEBI:57540"/>
    </ligand>
</feature>
<feature type="binding site" evidence="1">
    <location>
        <position position="112"/>
    </location>
    <ligand>
        <name>NAD(+)</name>
        <dbReference type="ChEBI" id="CHEBI:57540"/>
    </ligand>
</feature>
<feature type="binding site" evidence="1">
    <location>
        <begin position="129"/>
        <end position="131"/>
    </location>
    <ligand>
        <name>NAD(+)</name>
        <dbReference type="ChEBI" id="CHEBI:57540"/>
    </ligand>
</feature>
<feature type="binding site" evidence="1">
    <location>
        <position position="131"/>
    </location>
    <ligand>
        <name>substrate</name>
    </ligand>
</feature>
<feature type="binding site" evidence="1">
    <location>
        <position position="162"/>
    </location>
    <ligand>
        <name>substrate</name>
    </ligand>
</feature>
<comment type="function">
    <text evidence="1">Catalyzes the reversible oxidation of malate to oxaloacetate.</text>
</comment>
<comment type="catalytic activity">
    <reaction evidence="1">
        <text>(S)-malate + NAD(+) = oxaloacetate + NADH + H(+)</text>
        <dbReference type="Rhea" id="RHEA:21432"/>
        <dbReference type="ChEBI" id="CHEBI:15378"/>
        <dbReference type="ChEBI" id="CHEBI:15589"/>
        <dbReference type="ChEBI" id="CHEBI:16452"/>
        <dbReference type="ChEBI" id="CHEBI:57540"/>
        <dbReference type="ChEBI" id="CHEBI:57945"/>
        <dbReference type="EC" id="1.1.1.37"/>
    </reaction>
</comment>
<comment type="similarity">
    <text evidence="1">Belongs to the LDH/MDH superfamily. MDH type 2 family.</text>
</comment>
<organism>
    <name type="scientific">Teredinibacter turnerae (strain ATCC 39867 / T7901)</name>
    <dbReference type="NCBI Taxonomy" id="377629"/>
    <lineage>
        <taxon>Bacteria</taxon>
        <taxon>Pseudomonadati</taxon>
        <taxon>Pseudomonadota</taxon>
        <taxon>Gammaproteobacteria</taxon>
        <taxon>Cellvibrionales</taxon>
        <taxon>Cellvibrionaceae</taxon>
        <taxon>Teredinibacter</taxon>
    </lineage>
</organism>
<reference key="1">
    <citation type="journal article" date="2009" name="PLoS ONE">
        <title>The complete genome of Teredinibacter turnerae T7901: an intracellular endosymbiont of marine wood-boring bivalves (shipworms).</title>
        <authorList>
            <person name="Yang J.C."/>
            <person name="Madupu R."/>
            <person name="Durkin A.S."/>
            <person name="Ekborg N.A."/>
            <person name="Pedamallu C.S."/>
            <person name="Hostetler J.B."/>
            <person name="Radune D."/>
            <person name="Toms B.S."/>
            <person name="Henrissat B."/>
            <person name="Coutinho P.M."/>
            <person name="Schwarz S."/>
            <person name="Field L."/>
            <person name="Trindade-Silva A.E."/>
            <person name="Soares C.A.G."/>
            <person name="Elshahawi S."/>
            <person name="Hanora A."/>
            <person name="Schmidt E.W."/>
            <person name="Haygood M.G."/>
            <person name="Posfai J."/>
            <person name="Benner J."/>
            <person name="Madinger C."/>
            <person name="Nove J."/>
            <person name="Anton B."/>
            <person name="Chaudhary K."/>
            <person name="Foster J."/>
            <person name="Holman A."/>
            <person name="Kumar S."/>
            <person name="Lessard P.A."/>
            <person name="Luyten Y.A."/>
            <person name="Slatko B."/>
            <person name="Wood N."/>
            <person name="Wu B."/>
            <person name="Teplitski M."/>
            <person name="Mougous J.D."/>
            <person name="Ward N."/>
            <person name="Eisen J.A."/>
            <person name="Badger J.H."/>
            <person name="Distel D.L."/>
        </authorList>
    </citation>
    <scope>NUCLEOTIDE SEQUENCE [LARGE SCALE GENOMIC DNA]</scope>
    <source>
        <strain>ATCC 39867 / T7901</strain>
    </source>
</reference>
<keyword id="KW-0520">NAD</keyword>
<keyword id="KW-0560">Oxidoreductase</keyword>
<keyword id="KW-1185">Reference proteome</keyword>
<keyword id="KW-0816">Tricarboxylic acid cycle</keyword>